<protein>
    <recommendedName>
        <fullName>Keratin, type I cytoskeletal 28</fullName>
    </recommendedName>
    <alternativeName>
        <fullName>Cytokeratin-28</fullName>
        <shortName>CK-28</shortName>
    </alternativeName>
    <alternativeName>
        <fullName>Keratin-25D</fullName>
        <shortName>K25D</shortName>
    </alternativeName>
    <alternativeName>
        <fullName>Keratin-28</fullName>
        <shortName>K28</shortName>
    </alternativeName>
    <alternativeName>
        <fullName>Type I inner root sheath-specific keratin-K25irs4</fullName>
    </alternativeName>
</protein>
<organism>
    <name type="scientific">Homo sapiens</name>
    <name type="common">Human</name>
    <dbReference type="NCBI Taxonomy" id="9606"/>
    <lineage>
        <taxon>Eukaryota</taxon>
        <taxon>Metazoa</taxon>
        <taxon>Chordata</taxon>
        <taxon>Craniata</taxon>
        <taxon>Vertebrata</taxon>
        <taxon>Euteleostomi</taxon>
        <taxon>Mammalia</taxon>
        <taxon>Eutheria</taxon>
        <taxon>Euarchontoglires</taxon>
        <taxon>Primates</taxon>
        <taxon>Haplorrhini</taxon>
        <taxon>Catarrhini</taxon>
        <taxon>Hominidae</taxon>
        <taxon>Homo</taxon>
    </lineage>
</organism>
<dbReference type="EMBL" id="AJ564207">
    <property type="protein sequence ID" value="CAD91907.1"/>
    <property type="molecule type" value="mRNA"/>
</dbReference>
<dbReference type="EMBL" id="AK129827">
    <property type="protein sequence ID" value="BAC85240.1"/>
    <property type="status" value="ALT_INIT"/>
    <property type="molecule type" value="mRNA"/>
</dbReference>
<dbReference type="EMBL" id="AC090283">
    <property type="status" value="NOT_ANNOTATED_CDS"/>
    <property type="molecule type" value="Genomic_DNA"/>
</dbReference>
<dbReference type="CCDS" id="CCDS11376.1"/>
<dbReference type="RefSeq" id="NP_853513.2">
    <property type="nucleotide sequence ID" value="NM_181535.3"/>
</dbReference>
<dbReference type="SMR" id="Q7Z3Y7"/>
<dbReference type="BioGRID" id="127825">
    <property type="interactions" value="28"/>
</dbReference>
<dbReference type="FunCoup" id="Q7Z3Y7">
    <property type="interactions" value="218"/>
</dbReference>
<dbReference type="IntAct" id="Q7Z3Y7">
    <property type="interactions" value="20"/>
</dbReference>
<dbReference type="STRING" id="9606.ENSP00000305263"/>
<dbReference type="GlyGen" id="Q7Z3Y7">
    <property type="glycosylation" value="1 site, 1 O-linked glycan (1 site)"/>
</dbReference>
<dbReference type="iPTMnet" id="Q7Z3Y7"/>
<dbReference type="PhosphoSitePlus" id="Q7Z3Y7"/>
<dbReference type="SwissPalm" id="Q7Z3Y7"/>
<dbReference type="BioMuta" id="KRT28"/>
<dbReference type="DMDM" id="294862446"/>
<dbReference type="jPOST" id="Q7Z3Y7"/>
<dbReference type="MassIVE" id="Q7Z3Y7"/>
<dbReference type="PaxDb" id="9606-ENSP00000305263"/>
<dbReference type="PeptideAtlas" id="Q7Z3Y7"/>
<dbReference type="ProteomicsDB" id="69095"/>
<dbReference type="Antibodypedia" id="28714">
    <property type="antibodies" value="84 antibodies from 19 providers"/>
</dbReference>
<dbReference type="DNASU" id="162605"/>
<dbReference type="Ensembl" id="ENST00000306658.8">
    <property type="protein sequence ID" value="ENSP00000305263.7"/>
    <property type="gene ID" value="ENSG00000173908.9"/>
</dbReference>
<dbReference type="GeneID" id="162605"/>
<dbReference type="KEGG" id="hsa:162605"/>
<dbReference type="MANE-Select" id="ENST00000306658.8">
    <property type="protein sequence ID" value="ENSP00000305263.7"/>
    <property type="RefSeq nucleotide sequence ID" value="NM_181535.3"/>
    <property type="RefSeq protein sequence ID" value="NP_853513.2"/>
</dbReference>
<dbReference type="UCSC" id="uc002hvh.2">
    <property type="organism name" value="human"/>
</dbReference>
<dbReference type="AGR" id="HGNC:30842"/>
<dbReference type="CTD" id="162605"/>
<dbReference type="DisGeNET" id="162605"/>
<dbReference type="GeneCards" id="KRT28"/>
<dbReference type="HGNC" id="HGNC:30842">
    <property type="gene designation" value="KRT28"/>
</dbReference>
<dbReference type="HPA" id="ENSG00000173908">
    <property type="expression patterns" value="Tissue enriched (skin)"/>
</dbReference>
<dbReference type="MIM" id="616677">
    <property type="type" value="gene"/>
</dbReference>
<dbReference type="neXtProt" id="NX_Q7Z3Y7"/>
<dbReference type="OpenTargets" id="ENSG00000173908"/>
<dbReference type="PharmGKB" id="PA134871316"/>
<dbReference type="VEuPathDB" id="HostDB:ENSG00000173908"/>
<dbReference type="eggNOG" id="ENOG502SHRG">
    <property type="taxonomic scope" value="Eukaryota"/>
</dbReference>
<dbReference type="GeneTree" id="ENSGT00940000162192"/>
<dbReference type="HOGENOM" id="CLU_012560_8_3_1"/>
<dbReference type="InParanoid" id="Q7Z3Y7"/>
<dbReference type="OMA" id="FAGSNAC"/>
<dbReference type="OrthoDB" id="9532690at2759"/>
<dbReference type="PAN-GO" id="Q7Z3Y7">
    <property type="GO annotations" value="1 GO annotation based on evolutionary models"/>
</dbReference>
<dbReference type="PhylomeDB" id="Q7Z3Y7"/>
<dbReference type="TreeFam" id="TF332742"/>
<dbReference type="PathwayCommons" id="Q7Z3Y7"/>
<dbReference type="Reactome" id="R-HSA-6805567">
    <property type="pathway name" value="Keratinization"/>
</dbReference>
<dbReference type="Reactome" id="R-HSA-6809371">
    <property type="pathway name" value="Formation of the cornified envelope"/>
</dbReference>
<dbReference type="SignaLink" id="Q7Z3Y7"/>
<dbReference type="BioGRID-ORCS" id="162605">
    <property type="hits" value="13 hits in 1135 CRISPR screens"/>
</dbReference>
<dbReference type="ChiTaRS" id="KRT28">
    <property type="organism name" value="human"/>
</dbReference>
<dbReference type="GenomeRNAi" id="162605"/>
<dbReference type="Pharos" id="Q7Z3Y7">
    <property type="development level" value="Tdark"/>
</dbReference>
<dbReference type="PRO" id="PR:Q7Z3Y7"/>
<dbReference type="Proteomes" id="UP000005640">
    <property type="component" value="Chromosome 17"/>
</dbReference>
<dbReference type="RNAct" id="Q7Z3Y7">
    <property type="molecule type" value="protein"/>
</dbReference>
<dbReference type="Bgee" id="ENSG00000173908">
    <property type="expression patterns" value="Expressed in male germ line stem cell (sensu Vertebrata) in testis and 12 other cell types or tissues"/>
</dbReference>
<dbReference type="GO" id="GO:0005856">
    <property type="term" value="C:cytoskeleton"/>
    <property type="evidence" value="ECO:0000318"/>
    <property type="project" value="GO_Central"/>
</dbReference>
<dbReference type="GO" id="GO:0005829">
    <property type="term" value="C:cytosol"/>
    <property type="evidence" value="ECO:0000304"/>
    <property type="project" value="Reactome"/>
</dbReference>
<dbReference type="GO" id="GO:0070062">
    <property type="term" value="C:extracellular exosome"/>
    <property type="evidence" value="ECO:0007005"/>
    <property type="project" value="UniProtKB"/>
</dbReference>
<dbReference type="GO" id="GO:0005882">
    <property type="term" value="C:intermediate filament"/>
    <property type="evidence" value="ECO:0007669"/>
    <property type="project" value="UniProtKB-KW"/>
</dbReference>
<dbReference type="GO" id="GO:0005198">
    <property type="term" value="F:structural molecule activity"/>
    <property type="evidence" value="ECO:0007669"/>
    <property type="project" value="InterPro"/>
</dbReference>
<dbReference type="GO" id="GO:0030855">
    <property type="term" value="P:epithelial cell differentiation"/>
    <property type="evidence" value="ECO:0000318"/>
    <property type="project" value="GO_Central"/>
</dbReference>
<dbReference type="GO" id="GO:0031069">
    <property type="term" value="P:hair follicle morphogenesis"/>
    <property type="evidence" value="ECO:0000318"/>
    <property type="project" value="GO_Central"/>
</dbReference>
<dbReference type="GO" id="GO:0045109">
    <property type="term" value="P:intermediate filament organization"/>
    <property type="evidence" value="ECO:0000318"/>
    <property type="project" value="GO_Central"/>
</dbReference>
<dbReference type="FunFam" id="1.20.5.1160:FF:000002">
    <property type="entry name" value="Type I keratin 10"/>
    <property type="match status" value="1"/>
</dbReference>
<dbReference type="FunFam" id="1.20.5.170:FF:000002">
    <property type="entry name" value="Type I keratin KA11"/>
    <property type="match status" value="1"/>
</dbReference>
<dbReference type="FunFam" id="1.20.5.500:FF:000001">
    <property type="entry name" value="Type II keratin 23"/>
    <property type="match status" value="1"/>
</dbReference>
<dbReference type="Gene3D" id="1.20.5.170">
    <property type="match status" value="1"/>
</dbReference>
<dbReference type="Gene3D" id="1.20.5.500">
    <property type="entry name" value="Single helix bin"/>
    <property type="match status" value="1"/>
</dbReference>
<dbReference type="Gene3D" id="1.20.5.1160">
    <property type="entry name" value="Vasodilator-stimulated phosphoprotein"/>
    <property type="match status" value="1"/>
</dbReference>
<dbReference type="InterPro" id="IPR039008">
    <property type="entry name" value="IF_rod_dom"/>
</dbReference>
<dbReference type="InterPro" id="IPR002957">
    <property type="entry name" value="Keratin_I"/>
</dbReference>
<dbReference type="PANTHER" id="PTHR23239">
    <property type="entry name" value="INTERMEDIATE FILAMENT"/>
    <property type="match status" value="1"/>
</dbReference>
<dbReference type="PANTHER" id="PTHR23239:SF215">
    <property type="entry name" value="KERATIN, TYPE I CYTOSKELETAL 28"/>
    <property type="match status" value="1"/>
</dbReference>
<dbReference type="Pfam" id="PF00038">
    <property type="entry name" value="Filament"/>
    <property type="match status" value="1"/>
</dbReference>
<dbReference type="PRINTS" id="PR01248">
    <property type="entry name" value="TYPE1KERATIN"/>
</dbReference>
<dbReference type="SMART" id="SM01391">
    <property type="entry name" value="Filament"/>
    <property type="match status" value="1"/>
</dbReference>
<dbReference type="SUPFAM" id="SSF64593">
    <property type="entry name" value="Intermediate filament protein, coiled coil region"/>
    <property type="match status" value="2"/>
</dbReference>
<dbReference type="PROSITE" id="PS51842">
    <property type="entry name" value="IF_ROD_2"/>
    <property type="match status" value="1"/>
</dbReference>
<sequence>MSLQFSNGSRHVCLRSGAGSVRPLNGGAGFAGSSACGGSVAGSEFSCALGGGLGSVPGGSHAGGALGNAACIGFAGSEGGLLSGNEKVTMQNLNDRLASYLDNVRALEEANAELERKIKGWYEKYGPGSCRGLDHDYSRYHLTIEDLKNKIISSTTTNANVILQIDNARLAADDFRLKYENELTLHQNVEADINGLRRVLDELTLCRTDQELQYESLSEEMTYLKKNHEEEMKALQCAAGGNVNVEMNAAPGVDLAVLLNNMRAEYEALAEQNRKDAEAWFNEKSASLQQQISHDSGAATFARSQLTEMRRTLQTLEIQLQSLMATKHSLECSLTETESNYCTQLAQIQAQIGALEEQLHQVRTETEGQKLEYEHLLDVKVHLEKEIETYCRLIDGDGNSCSKSKGFGSGSPGNSSKDLSKTTLVKTVVEELDQRGKVLSSRIHSIEEKTSKMTNGKTEQRVPF</sequence>
<comment type="function">
    <text evidence="1">Essential for the proper assembly of types I and II keratin protein complexes and the formation of keratin intermediate filaments in the inner root sheath (irs).</text>
</comment>
<comment type="subunit">
    <text evidence="7">Heterotetramer of two type I and two type II keratins.</text>
</comment>
<comment type="interaction">
    <interactant intactId="EBI-11980489">
        <id>Q7Z3Y7</id>
    </interactant>
    <interactant intactId="EBI-742038">
        <id>Q9P2A4</id>
        <label>ABI3</label>
    </interactant>
    <organismsDiffer>false</organismsDiffer>
    <experiments>3</experiments>
</comment>
<comment type="interaction">
    <interactant intactId="EBI-11980489">
        <id>Q7Z3Y7</id>
    </interactant>
    <interactant intactId="EBI-10181422">
        <id>A0A1B0GWI1</id>
        <label>CCDC196</label>
    </interactant>
    <organismsDiffer>false</organismsDiffer>
    <experiments>3</experiments>
</comment>
<comment type="interaction">
    <interactant intactId="EBI-11980489">
        <id>Q7Z3Y7</id>
    </interactant>
    <interactant intactId="EBI-748597">
        <id>Q05D60</id>
        <label>DEUP1</label>
    </interactant>
    <organismsDiffer>false</organismsDiffer>
    <experiments>3</experiments>
</comment>
<comment type="interaction">
    <interactant intactId="EBI-11980489">
        <id>Q7Z3Y7</id>
    </interactant>
    <interactant intactId="EBI-298429">
        <id>P04264</id>
        <label>KRT1</label>
    </interactant>
    <organismsDiffer>false</organismsDiffer>
    <experiments>5</experiments>
</comment>
<comment type="interaction">
    <interactant intactId="EBI-11980489">
        <id>Q7Z3Y7</id>
    </interactant>
    <interactant intactId="EBI-2430095">
        <id>P12035</id>
        <label>KRT3</label>
    </interactant>
    <organismsDiffer>false</organismsDiffer>
    <experiments>5</experiments>
</comment>
<comment type="interaction">
    <interactant intactId="EBI-11980489">
        <id>Q7Z3Y7</id>
    </interactant>
    <interactant intactId="EBI-2371606">
        <id>P19013</id>
        <label>KRT4</label>
    </interactant>
    <organismsDiffer>false</organismsDiffer>
    <experiments>3</experiments>
</comment>
<comment type="interaction">
    <interactant intactId="EBI-11980489">
        <id>Q7Z3Y7</id>
    </interactant>
    <interactant intactId="EBI-702187">
        <id>P13647</id>
        <label>KRT5</label>
    </interactant>
    <organismsDiffer>false</organismsDiffer>
    <experiments>3</experiments>
</comment>
<comment type="interaction">
    <interactant intactId="EBI-11980489">
        <id>Q7Z3Y7</id>
    </interactant>
    <interactant intactId="EBI-702198">
        <id>P02538</id>
        <label>KRT6A</label>
    </interactant>
    <organismsDiffer>false</organismsDiffer>
    <experiments>5</experiments>
</comment>
<comment type="interaction">
    <interactant intactId="EBI-11980489">
        <id>Q7Z3Y7</id>
    </interactant>
    <interactant intactId="EBI-740907">
        <id>P04259</id>
        <label>KRT6B</label>
    </interactant>
    <organismsDiffer>false</organismsDiffer>
    <experiments>5</experiments>
</comment>
<comment type="interaction">
    <interactant intactId="EBI-11980489">
        <id>Q7Z3Y7</id>
    </interactant>
    <interactant intactId="EBI-2952676">
        <id>Q3SY84</id>
        <label>KRT71</label>
    </interactant>
    <organismsDiffer>false</organismsDiffer>
    <experiments>5</experiments>
</comment>
<comment type="interaction">
    <interactant intactId="EBI-11980489">
        <id>Q7Z3Y7</id>
    </interactant>
    <interactant intactId="EBI-2514135">
        <id>Q5XKE5</id>
        <label>KRT79</label>
    </interactant>
    <organismsDiffer>false</organismsDiffer>
    <experiments>3</experiments>
</comment>
<comment type="interaction">
    <interactant intactId="EBI-11980489">
        <id>Q7Z3Y7</id>
    </interactant>
    <interactant intactId="EBI-297852">
        <id>P05787</id>
        <label>KRT8</label>
    </interactant>
    <organismsDiffer>false</organismsDiffer>
    <experiments>5</experiments>
</comment>
<comment type="interaction">
    <interactant intactId="EBI-11980489">
        <id>Q7Z3Y7</id>
    </interactant>
    <interactant intactId="EBI-11999246">
        <id>Q6KB66-2</id>
        <label>KRT80</label>
    </interactant>
    <organismsDiffer>false</organismsDiffer>
    <experiments>3</experiments>
</comment>
<comment type="interaction">
    <interactant intactId="EBI-11980489">
        <id>Q7Z3Y7</id>
    </interactant>
    <interactant intactId="EBI-739648">
        <id>Q14533</id>
        <label>KRT81</label>
    </interactant>
    <organismsDiffer>false</organismsDiffer>
    <experiments>3</experiments>
</comment>
<comment type="interaction">
    <interactant intactId="EBI-11980489">
        <id>Q7Z3Y7</id>
    </interactant>
    <interactant intactId="EBI-9996498">
        <id>O43790</id>
        <label>KRT86</label>
    </interactant>
    <organismsDiffer>false</organismsDiffer>
    <experiments>3</experiments>
</comment>
<comment type="interaction">
    <interactant intactId="EBI-11980489">
        <id>Q7Z3Y7</id>
    </interactant>
    <interactant intactId="EBI-2811583">
        <id>Q9BVL2</id>
        <label>NUP58</label>
    </interactant>
    <organismsDiffer>false</organismsDiffer>
    <experiments>3</experiments>
</comment>
<comment type="interaction">
    <interactant intactId="EBI-11980489">
        <id>Q7Z3Y7</id>
    </interactant>
    <interactant intactId="EBI-739895">
        <id>Q8N6Y0</id>
        <label>USHBP1</label>
    </interactant>
    <organismsDiffer>false</organismsDiffer>
    <experiments>3</experiments>
</comment>
<comment type="subcellular location">
    <subcellularLocation>
        <location evidence="1">Cytoplasm</location>
    </subcellularLocation>
</comment>
<comment type="tissue specificity">
    <text evidence="5 6">Strongly expressed in skin and scalp, and weak expression observed in thymus. In the hair follicle, expressed in Henle layer, Huxley layer and in the irs cuticle. Expression extends from the bulb region up to the point of differentiation into the three layers. Also present in the medulla of beard hair (at protein level).</text>
</comment>
<comment type="miscellaneous">
    <text evidence="7">There are two types of cytoskeletal and microfibrillar keratin: I (acidic; 40-55 kDa) and II (neutral to basic; 56-70 kDa).</text>
</comment>
<comment type="similarity">
    <text evidence="3">Belongs to the intermediate filament family.</text>
</comment>
<comment type="sequence caution" evidence="7">
    <conflict type="erroneous initiation">
        <sequence resource="EMBL-CDS" id="BAC85240"/>
    </conflict>
</comment>
<gene>
    <name evidence="10" type="primary">KRT28</name>
    <name evidence="9 10" type="synonym">KRT25D</name>
</gene>
<reference evidence="5 9" key="1">
    <citation type="journal article" date="2004" name="Differentiation">
        <title>The human type I keratin gene family: characterization of new hair follicle specific members and evaluation of the chromosome 17q21.2 gene domain.</title>
        <authorList>
            <person name="Rogers M.A."/>
            <person name="Winter H."/>
            <person name="Langbein L."/>
            <person name="Bleiler R."/>
            <person name="Schweizer J."/>
        </authorList>
    </citation>
    <scope>NUCLEOTIDE SEQUENCE [MRNA]</scope>
    <scope>VARIANT VAL-62</scope>
    <scope>TISSUE SPECIFICITY</scope>
    <source>
        <tissue evidence="9">Scalp</tissue>
    </source>
</reference>
<reference evidence="8" key="2">
    <citation type="journal article" date="2004" name="Nat. Genet.">
        <title>Complete sequencing and characterization of 21,243 full-length human cDNAs.</title>
        <authorList>
            <person name="Ota T."/>
            <person name="Suzuki Y."/>
            <person name="Nishikawa T."/>
            <person name="Otsuki T."/>
            <person name="Sugiyama T."/>
            <person name="Irie R."/>
            <person name="Wakamatsu A."/>
            <person name="Hayashi K."/>
            <person name="Sato H."/>
            <person name="Nagai K."/>
            <person name="Kimura K."/>
            <person name="Makita H."/>
            <person name="Sekine M."/>
            <person name="Obayashi M."/>
            <person name="Nishi T."/>
            <person name="Shibahara T."/>
            <person name="Tanaka T."/>
            <person name="Ishii S."/>
            <person name="Yamamoto J."/>
            <person name="Saito K."/>
            <person name="Kawai Y."/>
            <person name="Isono Y."/>
            <person name="Nakamura Y."/>
            <person name="Nagahari K."/>
            <person name="Murakami K."/>
            <person name="Yasuda T."/>
            <person name="Iwayanagi T."/>
            <person name="Wagatsuma M."/>
            <person name="Shiratori A."/>
            <person name="Sudo H."/>
            <person name="Hosoiri T."/>
            <person name="Kaku Y."/>
            <person name="Kodaira H."/>
            <person name="Kondo H."/>
            <person name="Sugawara M."/>
            <person name="Takahashi M."/>
            <person name="Kanda K."/>
            <person name="Yokoi T."/>
            <person name="Furuya T."/>
            <person name="Kikkawa E."/>
            <person name="Omura Y."/>
            <person name="Abe K."/>
            <person name="Kamihara K."/>
            <person name="Katsuta N."/>
            <person name="Sato K."/>
            <person name="Tanikawa M."/>
            <person name="Yamazaki M."/>
            <person name="Ninomiya K."/>
            <person name="Ishibashi T."/>
            <person name="Yamashita H."/>
            <person name="Murakawa K."/>
            <person name="Fujimori K."/>
            <person name="Tanai H."/>
            <person name="Kimata M."/>
            <person name="Watanabe M."/>
            <person name="Hiraoka S."/>
            <person name="Chiba Y."/>
            <person name="Ishida S."/>
            <person name="Ono Y."/>
            <person name="Takiguchi S."/>
            <person name="Watanabe S."/>
            <person name="Yosida M."/>
            <person name="Hotuta T."/>
            <person name="Kusano J."/>
            <person name="Kanehori K."/>
            <person name="Takahashi-Fujii A."/>
            <person name="Hara H."/>
            <person name="Tanase T.-O."/>
            <person name="Nomura Y."/>
            <person name="Togiya S."/>
            <person name="Komai F."/>
            <person name="Hara R."/>
            <person name="Takeuchi K."/>
            <person name="Arita M."/>
            <person name="Imose N."/>
            <person name="Musashino K."/>
            <person name="Yuuki H."/>
            <person name="Oshima A."/>
            <person name="Sasaki N."/>
            <person name="Aotsuka S."/>
            <person name="Yoshikawa Y."/>
            <person name="Matsunawa H."/>
            <person name="Ichihara T."/>
            <person name="Shiohata N."/>
            <person name="Sano S."/>
            <person name="Moriya S."/>
            <person name="Momiyama H."/>
            <person name="Satoh N."/>
            <person name="Takami S."/>
            <person name="Terashima Y."/>
            <person name="Suzuki O."/>
            <person name="Nakagawa S."/>
            <person name="Senoh A."/>
            <person name="Mizoguchi H."/>
            <person name="Goto Y."/>
            <person name="Shimizu F."/>
            <person name="Wakebe H."/>
            <person name="Hishigaki H."/>
            <person name="Watanabe T."/>
            <person name="Sugiyama A."/>
            <person name="Takemoto M."/>
            <person name="Kawakami B."/>
            <person name="Yamazaki M."/>
            <person name="Watanabe K."/>
            <person name="Kumagai A."/>
            <person name="Itakura S."/>
            <person name="Fukuzumi Y."/>
            <person name="Fujimori Y."/>
            <person name="Komiyama M."/>
            <person name="Tashiro H."/>
            <person name="Tanigami A."/>
            <person name="Fujiwara T."/>
            <person name="Ono T."/>
            <person name="Yamada K."/>
            <person name="Fujii Y."/>
            <person name="Ozaki K."/>
            <person name="Hirao M."/>
            <person name="Ohmori Y."/>
            <person name="Kawabata A."/>
            <person name="Hikiji T."/>
            <person name="Kobatake N."/>
            <person name="Inagaki H."/>
            <person name="Ikema Y."/>
            <person name="Okamoto S."/>
            <person name="Okitani R."/>
            <person name="Kawakami T."/>
            <person name="Noguchi S."/>
            <person name="Itoh T."/>
            <person name="Shigeta K."/>
            <person name="Senba T."/>
            <person name="Matsumura K."/>
            <person name="Nakajima Y."/>
            <person name="Mizuno T."/>
            <person name="Morinaga M."/>
            <person name="Sasaki M."/>
            <person name="Togashi T."/>
            <person name="Oyama M."/>
            <person name="Hata H."/>
            <person name="Watanabe M."/>
            <person name="Komatsu T."/>
            <person name="Mizushima-Sugano J."/>
            <person name="Satoh T."/>
            <person name="Shirai Y."/>
            <person name="Takahashi Y."/>
            <person name="Nakagawa K."/>
            <person name="Okumura K."/>
            <person name="Nagase T."/>
            <person name="Nomura N."/>
            <person name="Kikuchi H."/>
            <person name="Masuho Y."/>
            <person name="Yamashita R."/>
            <person name="Nakai K."/>
            <person name="Yada T."/>
            <person name="Nakamura Y."/>
            <person name="Ohara O."/>
            <person name="Isogai T."/>
            <person name="Sugano S."/>
        </authorList>
    </citation>
    <scope>NUCLEOTIDE SEQUENCE [LARGE SCALE MRNA]</scope>
    <source>
        <tissue evidence="8">Dermoid cancer</tissue>
    </source>
</reference>
<reference key="3">
    <citation type="journal article" date="2006" name="Nature">
        <title>DNA sequence of human chromosome 17 and analysis of rearrangement in the human lineage.</title>
        <authorList>
            <person name="Zody M.C."/>
            <person name="Garber M."/>
            <person name="Adams D.J."/>
            <person name="Sharpe T."/>
            <person name="Harrow J."/>
            <person name="Lupski J.R."/>
            <person name="Nicholson C."/>
            <person name="Searle S.M."/>
            <person name="Wilming L."/>
            <person name="Young S.K."/>
            <person name="Abouelleil A."/>
            <person name="Allen N.R."/>
            <person name="Bi W."/>
            <person name="Bloom T."/>
            <person name="Borowsky M.L."/>
            <person name="Bugalter B.E."/>
            <person name="Butler J."/>
            <person name="Chang J.L."/>
            <person name="Chen C.-K."/>
            <person name="Cook A."/>
            <person name="Corum B."/>
            <person name="Cuomo C.A."/>
            <person name="de Jong P.J."/>
            <person name="DeCaprio D."/>
            <person name="Dewar K."/>
            <person name="FitzGerald M."/>
            <person name="Gilbert J."/>
            <person name="Gibson R."/>
            <person name="Gnerre S."/>
            <person name="Goldstein S."/>
            <person name="Grafham D.V."/>
            <person name="Grocock R."/>
            <person name="Hafez N."/>
            <person name="Hagopian D.S."/>
            <person name="Hart E."/>
            <person name="Norman C.H."/>
            <person name="Humphray S."/>
            <person name="Jaffe D.B."/>
            <person name="Jones M."/>
            <person name="Kamal M."/>
            <person name="Khodiyar V.K."/>
            <person name="LaButti K."/>
            <person name="Laird G."/>
            <person name="Lehoczky J."/>
            <person name="Liu X."/>
            <person name="Lokyitsang T."/>
            <person name="Loveland J."/>
            <person name="Lui A."/>
            <person name="Macdonald P."/>
            <person name="Major J.E."/>
            <person name="Matthews L."/>
            <person name="Mauceli E."/>
            <person name="McCarroll S.A."/>
            <person name="Mihalev A.H."/>
            <person name="Mudge J."/>
            <person name="Nguyen C."/>
            <person name="Nicol R."/>
            <person name="O'Leary S.B."/>
            <person name="Osoegawa K."/>
            <person name="Schwartz D.C."/>
            <person name="Shaw-Smith C."/>
            <person name="Stankiewicz P."/>
            <person name="Steward C."/>
            <person name="Swarbreck D."/>
            <person name="Venkataraman V."/>
            <person name="Whittaker C.A."/>
            <person name="Yang X."/>
            <person name="Zimmer A.R."/>
            <person name="Bradley A."/>
            <person name="Hubbard T."/>
            <person name="Birren B.W."/>
            <person name="Rogers J."/>
            <person name="Lander E.S."/>
            <person name="Nusbaum C."/>
        </authorList>
    </citation>
    <scope>NUCLEOTIDE SEQUENCE [LARGE SCALE GENOMIC DNA]</scope>
</reference>
<reference evidence="7" key="4">
    <citation type="journal article" date="2006" name="J. Invest. Dermatol.">
        <title>K25 (K25irs1), K26 (K25irs2), K27 (K25irs3), and K28 (K25irs4) represent the type I inner root sheath keratins of the human hair follicle.</title>
        <authorList>
            <person name="Langbein L."/>
            <person name="Rogers M.A."/>
            <person name="Praetzel-Wunder S."/>
            <person name="Helmke B."/>
            <person name="Schirmacher P."/>
            <person name="Schweizer J."/>
        </authorList>
    </citation>
    <scope>TISSUE SPECIFICITY</scope>
</reference>
<feature type="chain" id="PRO_0000312705" description="Keratin, type I cytoskeletal 28">
    <location>
        <begin position="1"/>
        <end position="464"/>
    </location>
</feature>
<feature type="domain" description="IF rod" evidence="3">
    <location>
        <begin position="86"/>
        <end position="401"/>
    </location>
</feature>
<feature type="region of interest" description="Head" evidence="2">
    <location>
        <begin position="1"/>
        <end position="85"/>
    </location>
</feature>
<feature type="region of interest" description="Coil 1A" evidence="2">
    <location>
        <begin position="86"/>
        <end position="121"/>
    </location>
</feature>
<feature type="region of interest" description="Linker 1" evidence="2">
    <location>
        <begin position="122"/>
        <end position="143"/>
    </location>
</feature>
<feature type="region of interest" description="Coil 1B" evidence="2">
    <location>
        <begin position="144"/>
        <end position="235"/>
    </location>
</feature>
<feature type="region of interest" description="Linker 12" evidence="2">
    <location>
        <begin position="236"/>
        <end position="258"/>
    </location>
</feature>
<feature type="region of interest" description="Coil 2" evidence="2">
    <location>
        <begin position="259"/>
        <end position="397"/>
    </location>
</feature>
<feature type="region of interest" description="Tail" evidence="2">
    <location>
        <begin position="398"/>
        <end position="464"/>
    </location>
</feature>
<feature type="region of interest" description="Disordered" evidence="4">
    <location>
        <begin position="443"/>
        <end position="464"/>
    </location>
</feature>
<feature type="sequence variant" id="VAR_056009" description="In dbSNP:rs7209228.">
    <original>G</original>
    <variation>D</variation>
    <location>
        <position position="52"/>
    </location>
</feature>
<feature type="sequence variant" id="VAR_060236" description="In dbSNP:rs4624233." evidence="5">
    <original>A</original>
    <variation>V</variation>
    <location>
        <position position="62"/>
    </location>
</feature>
<feature type="sequence variant" id="VAR_056010" description="In dbSNP:rs17558995.">
    <original>A</original>
    <variation>T</variation>
    <location>
        <position position="286"/>
    </location>
</feature>
<name>K1C28_HUMAN</name>
<keyword id="KW-0175">Coiled coil</keyword>
<keyword id="KW-0963">Cytoplasm</keyword>
<keyword id="KW-0403">Intermediate filament</keyword>
<keyword id="KW-0416">Keratin</keyword>
<keyword id="KW-1267">Proteomics identification</keyword>
<keyword id="KW-1185">Reference proteome</keyword>
<proteinExistence type="evidence at protein level"/>
<evidence type="ECO:0000250" key="1">
    <source>
        <dbReference type="UniProtKB" id="A6BLY7"/>
    </source>
</evidence>
<evidence type="ECO:0000255" key="2"/>
<evidence type="ECO:0000255" key="3">
    <source>
        <dbReference type="PROSITE-ProRule" id="PRU01188"/>
    </source>
</evidence>
<evidence type="ECO:0000256" key="4">
    <source>
        <dbReference type="SAM" id="MobiDB-lite"/>
    </source>
</evidence>
<evidence type="ECO:0000269" key="5">
    <source>
    </source>
</evidence>
<evidence type="ECO:0000269" key="6">
    <source>
    </source>
</evidence>
<evidence type="ECO:0000305" key="7"/>
<evidence type="ECO:0000312" key="8">
    <source>
        <dbReference type="EMBL" id="BAC85240.1"/>
    </source>
</evidence>
<evidence type="ECO:0000312" key="9">
    <source>
        <dbReference type="EMBL" id="CAD91907.1"/>
    </source>
</evidence>
<evidence type="ECO:0000312" key="10">
    <source>
        <dbReference type="HGNC" id="HGNC:30842"/>
    </source>
</evidence>
<accession>Q7Z3Y7</accession>
<accession>Q6ZP84</accession>